<comment type="function">
    <text evidence="1">The pyruvate dehydrogenase complex catalyzes the overall conversion of pyruvate to acetyl-CoA and CO(2). It contains multiple copies of three enzymatic components: pyruvate dehydrogenase (E1), dihydrolipoamide acetyltransferase (E2) and lipoamide dehydrogenase (E3) (By similarity).</text>
</comment>
<comment type="catalytic activity">
    <reaction>
        <text>N(6)-[(R)-dihydrolipoyl]-L-lysyl-[protein] + acetyl-CoA = N(6)-[(R)-S(8)-acetyldihydrolipoyl]-L-lysyl-[protein] + CoA</text>
        <dbReference type="Rhea" id="RHEA:17017"/>
        <dbReference type="Rhea" id="RHEA-COMP:10475"/>
        <dbReference type="Rhea" id="RHEA-COMP:10478"/>
        <dbReference type="ChEBI" id="CHEBI:57287"/>
        <dbReference type="ChEBI" id="CHEBI:57288"/>
        <dbReference type="ChEBI" id="CHEBI:83100"/>
        <dbReference type="ChEBI" id="CHEBI:83111"/>
        <dbReference type="EC" id="2.3.1.12"/>
    </reaction>
</comment>
<comment type="cofactor">
    <cofactor evidence="1">
        <name>(R)-lipoate</name>
        <dbReference type="ChEBI" id="CHEBI:83088"/>
    </cofactor>
    <text evidence="1">Binds 1 lipoyl cofactor covalently.</text>
</comment>
<comment type="subunit">
    <text evidence="1">Forms a 24-polypeptide structural core with octahedral symmetry.</text>
</comment>
<comment type="similarity">
    <text evidence="5">Belongs to the 2-oxoacid dehydrogenase family.</text>
</comment>
<protein>
    <recommendedName>
        <fullName>Dihydrolipoyllysine-residue acetyltransferase component of pyruvate dehydrogenase complex</fullName>
        <ecNumber>2.3.1.12</ecNumber>
    </recommendedName>
    <alternativeName>
        <fullName>Dihydrolipoamide acetyltransferase component of pyruvate dehydrogenase complex</fullName>
    </alternativeName>
    <alternativeName>
        <fullName>E2</fullName>
    </alternativeName>
</protein>
<evidence type="ECO:0000250" key="1"/>
<evidence type="ECO:0000255" key="2"/>
<evidence type="ECO:0000255" key="3">
    <source>
        <dbReference type="PROSITE-ProRule" id="PRU01066"/>
    </source>
</evidence>
<evidence type="ECO:0000255" key="4">
    <source>
        <dbReference type="PROSITE-ProRule" id="PRU01170"/>
    </source>
</evidence>
<evidence type="ECO:0000305" key="5"/>
<gene>
    <name type="primary">pdhC</name>
    <name type="ordered locus">RC0764</name>
</gene>
<feature type="chain" id="PRO_0000162285" description="Dihydrolipoyllysine-residue acetyltransferase component of pyruvate dehydrogenase complex">
    <location>
        <begin position="1"/>
        <end position="412"/>
    </location>
</feature>
<feature type="domain" description="Lipoyl-binding" evidence="3">
    <location>
        <begin position="2"/>
        <end position="78"/>
    </location>
</feature>
<feature type="domain" description="Peripheral subunit-binding (PSBD)" evidence="4">
    <location>
        <begin position="132"/>
        <end position="169"/>
    </location>
</feature>
<feature type="active site" evidence="2">
    <location>
        <position position="385"/>
    </location>
</feature>
<feature type="modified residue" description="N6-lipoyllysine" evidence="1 3">
    <location>
        <position position="43"/>
    </location>
</feature>
<accession>Q92HK7</accession>
<keyword id="KW-0012">Acyltransferase</keyword>
<keyword id="KW-0450">Lipoyl</keyword>
<keyword id="KW-0808">Transferase</keyword>
<sequence length="412" mass="45426">MPIKILMPALSPTMTEGNLARWLKKEGDKVNPGEVIAEIETDKATMEVEAVDEGILAKIVIPQNSQNVPVNSLIAVLSEEGEEKTDIDAFIAKNNSVSPSPKTDANLPKPHENIANVEEQVTVIKHDVSRIFASPLAKRLAKMRNIRFESVKGSGPHGRIVKQDILSYTPSTAHNKIVSRNPEEYRLVPNNNIRKIIAKRLLESKQTVPHFYLSIECNVDKLLDIREDINKFFSEDKSTRISVNDFIILAVAKALQEVPNANASWGEDAIRYYNNVDISVAVAIENGLVTPIVKNANQKNILELSREMKALIKKAKDNKLTPEEFQGGGFTISNLGMYGIKNFNAIINPPQSCIMGVGASAKRAIVKNDQITIATIMDVTLSADHRVVDGAVGAEFLVAFKKFIESPVLMLI</sequence>
<name>ODP2_RICCN</name>
<proteinExistence type="inferred from homology"/>
<dbReference type="EC" id="2.3.1.12"/>
<dbReference type="EMBL" id="AE006914">
    <property type="protein sequence ID" value="AAL03302.1"/>
    <property type="molecule type" value="Genomic_DNA"/>
</dbReference>
<dbReference type="PIR" id="D97795">
    <property type="entry name" value="D97795"/>
</dbReference>
<dbReference type="RefSeq" id="WP_010977380.1">
    <property type="nucleotide sequence ID" value="NC_003103.1"/>
</dbReference>
<dbReference type="SMR" id="Q92HK7"/>
<dbReference type="GeneID" id="927481"/>
<dbReference type="KEGG" id="rco:RC0764"/>
<dbReference type="PATRIC" id="fig|272944.4.peg.867"/>
<dbReference type="HOGENOM" id="CLU_016733_10_2_5"/>
<dbReference type="Proteomes" id="UP000000816">
    <property type="component" value="Chromosome"/>
</dbReference>
<dbReference type="GO" id="GO:0045254">
    <property type="term" value="C:pyruvate dehydrogenase complex"/>
    <property type="evidence" value="ECO:0007669"/>
    <property type="project" value="InterPro"/>
</dbReference>
<dbReference type="GO" id="GO:0004742">
    <property type="term" value="F:dihydrolipoyllysine-residue acetyltransferase activity"/>
    <property type="evidence" value="ECO:0007669"/>
    <property type="project" value="UniProtKB-EC"/>
</dbReference>
<dbReference type="GO" id="GO:0006086">
    <property type="term" value="P:pyruvate decarboxylation to acetyl-CoA"/>
    <property type="evidence" value="ECO:0007669"/>
    <property type="project" value="InterPro"/>
</dbReference>
<dbReference type="CDD" id="cd06849">
    <property type="entry name" value="lipoyl_domain"/>
    <property type="match status" value="1"/>
</dbReference>
<dbReference type="FunFam" id="2.40.50.100:FF:000010">
    <property type="entry name" value="Acetyltransferase component of pyruvate dehydrogenase complex"/>
    <property type="match status" value="1"/>
</dbReference>
<dbReference type="FunFam" id="3.30.559.10:FF:000003">
    <property type="entry name" value="Acetyltransferase component of pyruvate dehydrogenase complex"/>
    <property type="match status" value="1"/>
</dbReference>
<dbReference type="Gene3D" id="2.40.50.100">
    <property type="match status" value="1"/>
</dbReference>
<dbReference type="Gene3D" id="3.30.559.10">
    <property type="entry name" value="Chloramphenicol acetyltransferase-like domain"/>
    <property type="match status" value="1"/>
</dbReference>
<dbReference type="Gene3D" id="4.10.320.10">
    <property type="entry name" value="E3-binding domain"/>
    <property type="match status" value="1"/>
</dbReference>
<dbReference type="InterPro" id="IPR003016">
    <property type="entry name" value="2-oxoA_DH_lipoyl-BS"/>
</dbReference>
<dbReference type="InterPro" id="IPR001078">
    <property type="entry name" value="2-oxoacid_DH_actylTfrase"/>
</dbReference>
<dbReference type="InterPro" id="IPR000089">
    <property type="entry name" value="Biotin_lipoyl"/>
</dbReference>
<dbReference type="InterPro" id="IPR023213">
    <property type="entry name" value="CAT-like_dom_sf"/>
</dbReference>
<dbReference type="InterPro" id="IPR045257">
    <property type="entry name" value="E2/Pdx1"/>
</dbReference>
<dbReference type="InterPro" id="IPR036625">
    <property type="entry name" value="E3-bd_dom_sf"/>
</dbReference>
<dbReference type="InterPro" id="IPR006257">
    <property type="entry name" value="LAT1"/>
</dbReference>
<dbReference type="InterPro" id="IPR004167">
    <property type="entry name" value="PSBD"/>
</dbReference>
<dbReference type="InterPro" id="IPR011053">
    <property type="entry name" value="Single_hybrid_motif"/>
</dbReference>
<dbReference type="NCBIfam" id="TIGR01349">
    <property type="entry name" value="PDHac_trf_mito"/>
    <property type="match status" value="1"/>
</dbReference>
<dbReference type="PANTHER" id="PTHR23151">
    <property type="entry name" value="DIHYDROLIPOAMIDE ACETYL/SUCCINYL-TRANSFERASE-RELATED"/>
    <property type="match status" value="1"/>
</dbReference>
<dbReference type="PANTHER" id="PTHR23151:SF90">
    <property type="entry name" value="DIHYDROLIPOYLLYSINE-RESIDUE ACETYLTRANSFERASE COMPONENT OF PYRUVATE DEHYDROGENASE COMPLEX, MITOCHONDRIAL-RELATED"/>
    <property type="match status" value="1"/>
</dbReference>
<dbReference type="Pfam" id="PF00198">
    <property type="entry name" value="2-oxoacid_dh"/>
    <property type="match status" value="1"/>
</dbReference>
<dbReference type="Pfam" id="PF00364">
    <property type="entry name" value="Biotin_lipoyl"/>
    <property type="match status" value="1"/>
</dbReference>
<dbReference type="Pfam" id="PF02817">
    <property type="entry name" value="E3_binding"/>
    <property type="match status" value="1"/>
</dbReference>
<dbReference type="SUPFAM" id="SSF52777">
    <property type="entry name" value="CoA-dependent acyltransferases"/>
    <property type="match status" value="1"/>
</dbReference>
<dbReference type="SUPFAM" id="SSF47005">
    <property type="entry name" value="Peripheral subunit-binding domain of 2-oxo acid dehydrogenase complex"/>
    <property type="match status" value="1"/>
</dbReference>
<dbReference type="SUPFAM" id="SSF51230">
    <property type="entry name" value="Single hybrid motif"/>
    <property type="match status" value="1"/>
</dbReference>
<dbReference type="PROSITE" id="PS50968">
    <property type="entry name" value="BIOTINYL_LIPOYL"/>
    <property type="match status" value="1"/>
</dbReference>
<dbReference type="PROSITE" id="PS00189">
    <property type="entry name" value="LIPOYL"/>
    <property type="match status" value="1"/>
</dbReference>
<dbReference type="PROSITE" id="PS51826">
    <property type="entry name" value="PSBD"/>
    <property type="match status" value="1"/>
</dbReference>
<reference key="1">
    <citation type="journal article" date="2001" name="Science">
        <title>Mechanisms of evolution in Rickettsia conorii and R. prowazekii.</title>
        <authorList>
            <person name="Ogata H."/>
            <person name="Audic S."/>
            <person name="Renesto-Audiffren P."/>
            <person name="Fournier P.-E."/>
            <person name="Barbe V."/>
            <person name="Samson D."/>
            <person name="Roux V."/>
            <person name="Cossart P."/>
            <person name="Weissenbach J."/>
            <person name="Claverie J.-M."/>
            <person name="Raoult D."/>
        </authorList>
    </citation>
    <scope>NUCLEOTIDE SEQUENCE [LARGE SCALE GENOMIC DNA]</scope>
    <source>
        <strain>ATCC VR-613 / Malish 7</strain>
    </source>
</reference>
<organism>
    <name type="scientific">Rickettsia conorii (strain ATCC VR-613 / Malish 7)</name>
    <dbReference type="NCBI Taxonomy" id="272944"/>
    <lineage>
        <taxon>Bacteria</taxon>
        <taxon>Pseudomonadati</taxon>
        <taxon>Pseudomonadota</taxon>
        <taxon>Alphaproteobacteria</taxon>
        <taxon>Rickettsiales</taxon>
        <taxon>Rickettsiaceae</taxon>
        <taxon>Rickettsieae</taxon>
        <taxon>Rickettsia</taxon>
        <taxon>spotted fever group</taxon>
    </lineage>
</organism>